<reference key="1">
    <citation type="book" date="2006" name="Gram positive pathogens, 2nd edition">
        <title>The Staphylococcus aureus NCTC 8325 genome.</title>
        <editorList>
            <person name="Fischetti V."/>
            <person name="Novick R."/>
            <person name="Ferretti J."/>
            <person name="Portnoy D."/>
            <person name="Rood J."/>
        </editorList>
        <authorList>
            <person name="Gillaspy A.F."/>
            <person name="Worrell V."/>
            <person name="Orvis J."/>
            <person name="Roe B.A."/>
            <person name="Dyer D.W."/>
            <person name="Iandolo J.J."/>
        </authorList>
    </citation>
    <scope>NUCLEOTIDE SEQUENCE [LARGE SCALE GENOMIC DNA]</scope>
    <source>
        <strain>NCTC 8325 / PS 47</strain>
    </source>
</reference>
<organism>
    <name type="scientific">Staphylococcus aureus (strain NCTC 8325 / PS 47)</name>
    <dbReference type="NCBI Taxonomy" id="93061"/>
    <lineage>
        <taxon>Bacteria</taxon>
        <taxon>Bacillati</taxon>
        <taxon>Bacillota</taxon>
        <taxon>Bacilli</taxon>
        <taxon>Bacillales</taxon>
        <taxon>Staphylococcaceae</taxon>
        <taxon>Staphylococcus</taxon>
    </lineage>
</organism>
<keyword id="KW-0030">Aminoacyl-tRNA synthetase</keyword>
<keyword id="KW-0067">ATP-binding</keyword>
<keyword id="KW-0175">Coiled coil</keyword>
<keyword id="KW-0963">Cytoplasm</keyword>
<keyword id="KW-0436">Ligase</keyword>
<keyword id="KW-0547">Nucleotide-binding</keyword>
<keyword id="KW-0648">Protein biosynthesis</keyword>
<keyword id="KW-1185">Reference proteome</keyword>
<comment type="function">
    <text evidence="1">Catalyzes the attachment of valine to tRNA(Val). As ValRS can inadvertently accommodate and process structurally similar amino acids such as threonine, to avoid such errors, it has a 'posttransfer' editing activity that hydrolyzes mischarged Thr-tRNA(Val) in a tRNA-dependent manner.</text>
</comment>
<comment type="catalytic activity">
    <reaction evidence="1">
        <text>tRNA(Val) + L-valine + ATP = L-valyl-tRNA(Val) + AMP + diphosphate</text>
        <dbReference type="Rhea" id="RHEA:10704"/>
        <dbReference type="Rhea" id="RHEA-COMP:9672"/>
        <dbReference type="Rhea" id="RHEA-COMP:9708"/>
        <dbReference type="ChEBI" id="CHEBI:30616"/>
        <dbReference type="ChEBI" id="CHEBI:33019"/>
        <dbReference type="ChEBI" id="CHEBI:57762"/>
        <dbReference type="ChEBI" id="CHEBI:78442"/>
        <dbReference type="ChEBI" id="CHEBI:78537"/>
        <dbReference type="ChEBI" id="CHEBI:456215"/>
        <dbReference type="EC" id="6.1.1.9"/>
    </reaction>
</comment>
<comment type="subunit">
    <text evidence="1">Monomer.</text>
</comment>
<comment type="subcellular location">
    <subcellularLocation>
        <location evidence="1">Cytoplasm</location>
    </subcellularLocation>
</comment>
<comment type="domain">
    <text evidence="1">ValRS has two distinct active sites: one for aminoacylation and one for editing. The misactivated threonine is translocated from the active site to the editing site.</text>
</comment>
<comment type="domain">
    <text evidence="1">The C-terminal coiled-coil domain is crucial for aminoacylation activity.</text>
</comment>
<comment type="similarity">
    <text evidence="1">Belongs to the class-I aminoacyl-tRNA synthetase family. ValS type 1 subfamily.</text>
</comment>
<sequence length="876" mass="101724">MEMKPKYDPREVEAGRYEEWVKNGYFKPSEDKSKETYTIVIPPPNVTGKLHLGHAWDTTLQDIITRMKRMQGYDTLYLPGMDHAGIATQAKVEAKLNEQGITRYDLGREKFLEQAWDWKEEYASFIRAQWAKLGLGLDYSRERFTLDEGLSKAVKKVFVDLYNKGIIYRGERIINWDPKARTALSDIEVIHEDVQGAFYHFKYPYADGEGFIEIATTRPETMLGDTAIVVNPNDERYKDVIGKTVILPIVGRELPILADEYVDIDFGSGAMKVTPAHDPNDFEIGQRHQLENIIVMDENGKMNDKAGKYEGMDRFDCRKQLVKDLKEQDLVIKIEDHVHSVGHSERSGAVVEPYLSTQWFVRMEDLAKRSLDNQKTDDRIDFYPQRFEHTFNQWMENIRDWTISRQLWWGHQIPAWYHKETGEIYVGEEAPTDIENWQQDEDVLDTWFSSALWPFSTLGWPDLESEDFKRYYPTNALVTGYDIIFFWVARMIFQGLEFTDRRPFNDVLLHGLVRAEDGRKMSKSLGNGVDPMDVIDEYGADSLRYFLATGSSPGHDLRYSTEKVESVWNFINKIWNGARFSLMNIGEDFKVEDIDLSGNLSLADKWILTRLNETIATVTDLSDKYEFGEVGRALYNFIWDDFCDWYIEMSKIPMNSNDEEQKQVTRSVLSYTLDNIMRMLHPFMPFVTEKIWQSLPHEGDTIVKASWPEVRESLIFEESKQTMQQLVEIIKSVRQSRVEVNTPLSKEIPILIQAKDKEIETTLSQNKDYLIKFCNPSTLNISTDVEIPEKAMTSVVIAGKVVLPLEGLIDMDKEISRLEKELAKLQSELDRVDKKLSNENFVSKAPEKVINEEKRKKQDYQEKYDGVKARIEQLKA</sequence>
<feature type="chain" id="PRO_1000022178" description="Valine--tRNA ligase">
    <location>
        <begin position="1"/>
        <end position="876"/>
    </location>
</feature>
<feature type="coiled-coil region" evidence="1">
    <location>
        <begin position="805"/>
        <end position="876"/>
    </location>
</feature>
<feature type="short sequence motif" description="'HIGH' region">
    <location>
        <begin position="44"/>
        <end position="54"/>
    </location>
</feature>
<feature type="short sequence motif" description="'KMSKS' region">
    <location>
        <begin position="520"/>
        <end position="524"/>
    </location>
</feature>
<feature type="binding site" evidence="1">
    <location>
        <position position="523"/>
    </location>
    <ligand>
        <name>ATP</name>
        <dbReference type="ChEBI" id="CHEBI:30616"/>
    </ligand>
</feature>
<proteinExistence type="inferred from homology"/>
<evidence type="ECO:0000255" key="1">
    <source>
        <dbReference type="HAMAP-Rule" id="MF_02004"/>
    </source>
</evidence>
<dbReference type="EC" id="6.1.1.9" evidence="1"/>
<dbReference type="EMBL" id="CP000253">
    <property type="protein sequence ID" value="ABD30836.1"/>
    <property type="molecule type" value="Genomic_DNA"/>
</dbReference>
<dbReference type="RefSeq" id="WP_000425353.1">
    <property type="nucleotide sequence ID" value="NZ_LS483365.1"/>
</dbReference>
<dbReference type="RefSeq" id="YP_500272.1">
    <property type="nucleotide sequence ID" value="NC_007795.1"/>
</dbReference>
<dbReference type="SMR" id="Q2FXR8"/>
<dbReference type="STRING" id="93061.SAOUHSC_01767"/>
<dbReference type="PaxDb" id="1280-SAXN108_1690"/>
<dbReference type="GeneID" id="3919685"/>
<dbReference type="KEGG" id="sao:SAOUHSC_01767"/>
<dbReference type="PATRIC" id="fig|93061.5.peg.1610"/>
<dbReference type="eggNOG" id="COG0525">
    <property type="taxonomic scope" value="Bacteria"/>
</dbReference>
<dbReference type="HOGENOM" id="CLU_001493_0_2_9"/>
<dbReference type="OrthoDB" id="9810365at2"/>
<dbReference type="PRO" id="PR:Q2FXR8"/>
<dbReference type="Proteomes" id="UP000008816">
    <property type="component" value="Chromosome"/>
</dbReference>
<dbReference type="GO" id="GO:0005829">
    <property type="term" value="C:cytosol"/>
    <property type="evidence" value="ECO:0000318"/>
    <property type="project" value="GO_Central"/>
</dbReference>
<dbReference type="GO" id="GO:0002161">
    <property type="term" value="F:aminoacyl-tRNA deacylase activity"/>
    <property type="evidence" value="ECO:0007669"/>
    <property type="project" value="InterPro"/>
</dbReference>
<dbReference type="GO" id="GO:0005524">
    <property type="term" value="F:ATP binding"/>
    <property type="evidence" value="ECO:0007669"/>
    <property type="project" value="UniProtKB-UniRule"/>
</dbReference>
<dbReference type="GO" id="GO:0004832">
    <property type="term" value="F:valine-tRNA ligase activity"/>
    <property type="evidence" value="ECO:0000318"/>
    <property type="project" value="GO_Central"/>
</dbReference>
<dbReference type="GO" id="GO:0006438">
    <property type="term" value="P:valyl-tRNA aminoacylation"/>
    <property type="evidence" value="ECO:0000318"/>
    <property type="project" value="GO_Central"/>
</dbReference>
<dbReference type="CDD" id="cd07962">
    <property type="entry name" value="Anticodon_Ia_Val"/>
    <property type="match status" value="1"/>
</dbReference>
<dbReference type="CDD" id="cd00817">
    <property type="entry name" value="ValRS_core"/>
    <property type="match status" value="1"/>
</dbReference>
<dbReference type="FunFam" id="1.10.287.380:FF:000001">
    <property type="entry name" value="Valine--tRNA ligase"/>
    <property type="match status" value="1"/>
</dbReference>
<dbReference type="FunFam" id="1.10.730.10:FF:000014">
    <property type="entry name" value="Valine--tRNA ligase"/>
    <property type="match status" value="1"/>
</dbReference>
<dbReference type="FunFam" id="3.40.50.620:FF:000032">
    <property type="entry name" value="Valine--tRNA ligase"/>
    <property type="match status" value="1"/>
</dbReference>
<dbReference type="FunFam" id="3.40.50.620:FF:000098">
    <property type="entry name" value="Valine--tRNA ligase"/>
    <property type="match status" value="1"/>
</dbReference>
<dbReference type="FunFam" id="3.90.740.10:FF:000005">
    <property type="entry name" value="Valine--tRNA ligase, mitochondrial"/>
    <property type="match status" value="1"/>
</dbReference>
<dbReference type="Gene3D" id="3.40.50.620">
    <property type="entry name" value="HUPs"/>
    <property type="match status" value="2"/>
</dbReference>
<dbReference type="Gene3D" id="1.10.730.10">
    <property type="entry name" value="Isoleucyl-tRNA Synthetase, Domain 1"/>
    <property type="match status" value="1"/>
</dbReference>
<dbReference type="Gene3D" id="1.10.287.380">
    <property type="entry name" value="Valyl-tRNA synthetase, C-terminal domain"/>
    <property type="match status" value="1"/>
</dbReference>
<dbReference type="Gene3D" id="3.90.740.10">
    <property type="entry name" value="Valyl/Leucyl/Isoleucyl-tRNA synthetase, editing domain"/>
    <property type="match status" value="1"/>
</dbReference>
<dbReference type="HAMAP" id="MF_02004">
    <property type="entry name" value="Val_tRNA_synth_type1"/>
    <property type="match status" value="1"/>
</dbReference>
<dbReference type="InterPro" id="IPR001412">
    <property type="entry name" value="aa-tRNA-synth_I_CS"/>
</dbReference>
<dbReference type="InterPro" id="IPR002300">
    <property type="entry name" value="aa-tRNA-synth_Ia"/>
</dbReference>
<dbReference type="InterPro" id="IPR033705">
    <property type="entry name" value="Anticodon_Ia_Val"/>
</dbReference>
<dbReference type="InterPro" id="IPR013155">
    <property type="entry name" value="M/V/L/I-tRNA-synth_anticd-bd"/>
</dbReference>
<dbReference type="InterPro" id="IPR014729">
    <property type="entry name" value="Rossmann-like_a/b/a_fold"/>
</dbReference>
<dbReference type="InterPro" id="IPR010978">
    <property type="entry name" value="tRNA-bd_arm"/>
</dbReference>
<dbReference type="InterPro" id="IPR009080">
    <property type="entry name" value="tRNAsynth_Ia_anticodon-bd"/>
</dbReference>
<dbReference type="InterPro" id="IPR037118">
    <property type="entry name" value="Val-tRNA_synth_C_sf"/>
</dbReference>
<dbReference type="InterPro" id="IPR019499">
    <property type="entry name" value="Val-tRNA_synth_tRNA-bd"/>
</dbReference>
<dbReference type="InterPro" id="IPR009008">
    <property type="entry name" value="Val/Leu/Ile-tRNA-synth_edit"/>
</dbReference>
<dbReference type="InterPro" id="IPR002303">
    <property type="entry name" value="Valyl-tRNA_ligase"/>
</dbReference>
<dbReference type="NCBIfam" id="NF004349">
    <property type="entry name" value="PRK05729.1"/>
    <property type="match status" value="1"/>
</dbReference>
<dbReference type="NCBIfam" id="TIGR00422">
    <property type="entry name" value="valS"/>
    <property type="match status" value="1"/>
</dbReference>
<dbReference type="PANTHER" id="PTHR11946:SF93">
    <property type="entry name" value="VALINE--TRNA LIGASE, CHLOROPLASTIC_MITOCHONDRIAL 2"/>
    <property type="match status" value="1"/>
</dbReference>
<dbReference type="PANTHER" id="PTHR11946">
    <property type="entry name" value="VALYL-TRNA SYNTHETASES"/>
    <property type="match status" value="1"/>
</dbReference>
<dbReference type="Pfam" id="PF08264">
    <property type="entry name" value="Anticodon_1"/>
    <property type="match status" value="1"/>
</dbReference>
<dbReference type="Pfam" id="PF00133">
    <property type="entry name" value="tRNA-synt_1"/>
    <property type="match status" value="1"/>
</dbReference>
<dbReference type="Pfam" id="PF10458">
    <property type="entry name" value="Val_tRNA-synt_C"/>
    <property type="match status" value="1"/>
</dbReference>
<dbReference type="PRINTS" id="PR00986">
    <property type="entry name" value="TRNASYNTHVAL"/>
</dbReference>
<dbReference type="SUPFAM" id="SSF47323">
    <property type="entry name" value="Anticodon-binding domain of a subclass of class I aminoacyl-tRNA synthetases"/>
    <property type="match status" value="1"/>
</dbReference>
<dbReference type="SUPFAM" id="SSF52374">
    <property type="entry name" value="Nucleotidylyl transferase"/>
    <property type="match status" value="1"/>
</dbReference>
<dbReference type="SUPFAM" id="SSF46589">
    <property type="entry name" value="tRNA-binding arm"/>
    <property type="match status" value="1"/>
</dbReference>
<dbReference type="SUPFAM" id="SSF50677">
    <property type="entry name" value="ValRS/IleRS/LeuRS editing domain"/>
    <property type="match status" value="1"/>
</dbReference>
<dbReference type="PROSITE" id="PS00178">
    <property type="entry name" value="AA_TRNA_LIGASE_I"/>
    <property type="match status" value="1"/>
</dbReference>
<accession>Q2FXR8</accession>
<gene>
    <name evidence="1" type="primary">valS</name>
    <name type="ordered locus">SAOUHSC_01767</name>
</gene>
<name>SYV_STAA8</name>
<protein>
    <recommendedName>
        <fullName evidence="1">Valine--tRNA ligase</fullName>
        <ecNumber evidence="1">6.1.1.9</ecNumber>
    </recommendedName>
    <alternativeName>
        <fullName evidence="1">Valyl-tRNA synthetase</fullName>
        <shortName evidence="1">ValRS</shortName>
    </alternativeName>
</protein>